<accession>Q9U408</accession>
<sequence>MSRLAECTISDTVDELVQRAKLAEQAERYDDMAGACKTMAKMRNELNNEEANLLSVAYKNVVGARRSSWRIMSSIAKKQAGTPLAHQHDIYLKKVEEELIQICNDVLALPVLPITEKIGAEAKIFYYKMMGDYYRYSAEVQEGEQNDKSTEAAEEANQKATSLAEAELSVTHPIRLGLALNFSVFYYEIKNMPEKACSLAKAAFDAAITEVDSIKDETYKDSTLIMQLLRDNLTLWNSECETDS</sequence>
<feature type="chain" id="PRO_0000058652" description="14-3-3 protein homolog 1">
    <location>
        <begin position="1"/>
        <end position="244"/>
    </location>
</feature>
<evidence type="ECO:0000305" key="1"/>
<dbReference type="EMBL" id="AF207904">
    <property type="protein sequence ID" value="AAF19966.1"/>
    <property type="molecule type" value="mRNA"/>
</dbReference>
<dbReference type="SMR" id="Q9U408"/>
<dbReference type="OrthoDB" id="10260625at2759"/>
<dbReference type="Proteomes" id="UP000492820">
    <property type="component" value="Unplaced"/>
</dbReference>
<dbReference type="CDD" id="cd08774">
    <property type="entry name" value="14-3-3"/>
    <property type="match status" value="1"/>
</dbReference>
<dbReference type="Gene3D" id="1.20.190.20">
    <property type="entry name" value="14-3-3 domain"/>
    <property type="match status" value="1"/>
</dbReference>
<dbReference type="InterPro" id="IPR000308">
    <property type="entry name" value="14-3-3"/>
</dbReference>
<dbReference type="InterPro" id="IPR023409">
    <property type="entry name" value="14-3-3_CS"/>
</dbReference>
<dbReference type="InterPro" id="IPR036815">
    <property type="entry name" value="14-3-3_dom_sf"/>
</dbReference>
<dbReference type="InterPro" id="IPR023410">
    <property type="entry name" value="14-3-3_domain"/>
</dbReference>
<dbReference type="PANTHER" id="PTHR18860">
    <property type="entry name" value="14-3-3 PROTEIN"/>
    <property type="match status" value="1"/>
</dbReference>
<dbReference type="Pfam" id="PF00244">
    <property type="entry name" value="14-3-3"/>
    <property type="match status" value="1"/>
</dbReference>
<dbReference type="PIRSF" id="PIRSF000868">
    <property type="entry name" value="14-3-3"/>
    <property type="match status" value="1"/>
</dbReference>
<dbReference type="PRINTS" id="PR00305">
    <property type="entry name" value="1433ZETA"/>
</dbReference>
<dbReference type="SMART" id="SM00101">
    <property type="entry name" value="14_3_3"/>
    <property type="match status" value="1"/>
</dbReference>
<dbReference type="SUPFAM" id="SSF48445">
    <property type="entry name" value="14-3-3 protein"/>
    <property type="match status" value="1"/>
</dbReference>
<dbReference type="PROSITE" id="PS00796">
    <property type="entry name" value="1433_1"/>
    <property type="match status" value="1"/>
</dbReference>
<dbReference type="PROSITE" id="PS00797">
    <property type="entry name" value="1433_2"/>
    <property type="match status" value="1"/>
</dbReference>
<reference key="1">
    <citation type="journal article" date="2001" name="Parasitology">
        <title>Comparative analysis of the 14-3-3 gene and its expression in Echinococcus granulosus and Echinococcus multilocularis metacestodes.</title>
        <authorList>
            <person name="Siles-Lucas M."/>
            <person name="Nunes C.P."/>
            <person name="Zaha A."/>
        </authorList>
    </citation>
    <scope>NUCLEOTIDE SEQUENCE [MRNA]</scope>
    <source>
        <strain>CW1</strain>
    </source>
</reference>
<protein>
    <recommendedName>
        <fullName>14-3-3 protein homolog 1</fullName>
    </recommendedName>
</protein>
<organism>
    <name type="scientific">Echinococcus granulosus</name>
    <name type="common">Hydatid tapeworm</name>
    <dbReference type="NCBI Taxonomy" id="6210"/>
    <lineage>
        <taxon>Eukaryota</taxon>
        <taxon>Metazoa</taxon>
        <taxon>Spiralia</taxon>
        <taxon>Lophotrochozoa</taxon>
        <taxon>Platyhelminthes</taxon>
        <taxon>Cestoda</taxon>
        <taxon>Eucestoda</taxon>
        <taxon>Cyclophyllidea</taxon>
        <taxon>Taeniidae</taxon>
        <taxon>Echinococcus</taxon>
        <taxon>Echinococcus granulosus group</taxon>
    </lineage>
</organism>
<name>14331_ECHGR</name>
<proteinExistence type="evidence at transcript level"/>
<comment type="similarity">
    <text evidence="1">Belongs to the 14-3-3 family.</text>
</comment>